<evidence type="ECO:0000250" key="1"/>
<evidence type="ECO:0000256" key="2">
    <source>
        <dbReference type="SAM" id="MobiDB-lite"/>
    </source>
</evidence>
<evidence type="ECO:0000305" key="3"/>
<dbReference type="EC" id="7.1.1.2"/>
<dbReference type="EMBL" id="X86706">
    <property type="protein sequence ID" value="CAA60392.1"/>
    <property type="molecule type" value="mRNA"/>
</dbReference>
<dbReference type="SMR" id="Q36450"/>
<dbReference type="Proteomes" id="UP000189701">
    <property type="component" value="Unplaced"/>
</dbReference>
<dbReference type="GO" id="GO:0005739">
    <property type="term" value="C:mitochondrion"/>
    <property type="evidence" value="ECO:0007669"/>
    <property type="project" value="UniProtKB-SubCell"/>
</dbReference>
<dbReference type="GO" id="GO:0051287">
    <property type="term" value="F:NAD binding"/>
    <property type="evidence" value="ECO:0007669"/>
    <property type="project" value="InterPro"/>
</dbReference>
<dbReference type="GO" id="GO:0008137">
    <property type="term" value="F:NADH dehydrogenase (ubiquinone) activity"/>
    <property type="evidence" value="ECO:0007669"/>
    <property type="project" value="UniProtKB-EC"/>
</dbReference>
<dbReference type="GO" id="GO:0048038">
    <property type="term" value="F:quinone binding"/>
    <property type="evidence" value="ECO:0007669"/>
    <property type="project" value="InterPro"/>
</dbReference>
<dbReference type="GO" id="GO:0006120">
    <property type="term" value="P:mitochondrial electron transport, NADH to ubiquinone"/>
    <property type="evidence" value="ECO:0007669"/>
    <property type="project" value="TreeGrafter"/>
</dbReference>
<dbReference type="FunFam" id="1.10.645.10:FF:000005">
    <property type="entry name" value="NADH-quinone oxidoreductase subunit D"/>
    <property type="match status" value="1"/>
</dbReference>
<dbReference type="Gene3D" id="1.10.645.10">
    <property type="entry name" value="Cytochrome-c3 Hydrogenase, chain B"/>
    <property type="match status" value="1"/>
</dbReference>
<dbReference type="HAMAP" id="MF_01358">
    <property type="entry name" value="NDH1_NuoD"/>
    <property type="match status" value="1"/>
</dbReference>
<dbReference type="InterPro" id="IPR001135">
    <property type="entry name" value="NADH_Q_OxRdtase_suD"/>
</dbReference>
<dbReference type="InterPro" id="IPR022885">
    <property type="entry name" value="NDH1_su_D/H"/>
</dbReference>
<dbReference type="InterPro" id="IPR029014">
    <property type="entry name" value="NiFe-Hase_large"/>
</dbReference>
<dbReference type="NCBIfam" id="TIGR01962">
    <property type="entry name" value="NuoD"/>
    <property type="match status" value="1"/>
</dbReference>
<dbReference type="NCBIfam" id="NF004739">
    <property type="entry name" value="PRK06075.1"/>
    <property type="match status" value="1"/>
</dbReference>
<dbReference type="PANTHER" id="PTHR11993:SF10">
    <property type="entry name" value="NADH DEHYDROGENASE [UBIQUINONE] IRON-SULFUR PROTEIN 2, MITOCHONDRIAL"/>
    <property type="match status" value="1"/>
</dbReference>
<dbReference type="PANTHER" id="PTHR11993">
    <property type="entry name" value="NADH-UBIQUINONE OXIDOREDUCTASE 49 KDA SUBUNIT"/>
    <property type="match status" value="1"/>
</dbReference>
<dbReference type="Pfam" id="PF00346">
    <property type="entry name" value="Complex1_49kDa"/>
    <property type="match status" value="1"/>
</dbReference>
<dbReference type="SUPFAM" id="SSF56762">
    <property type="entry name" value="HydB/Nqo4-like"/>
    <property type="match status" value="1"/>
</dbReference>
<sequence>MTTKNRQIKNFTSNFGPQHPAAHGVSRSVLEMNGEVVERAEPHIGLLQRGTEKLIEYKTYLQALPYSDRSEYVSMMAQEHAHSSAVERLLNCEVPLRAQYIRVLFREITRISNHSLALTTHAMDVGASTPFLWAFEEREKLLEFYERVSGARMHASFIRPGGVAQDLPLGLCIDIDSFTQQFASRIDELEEMSTGNRIWKQRLVDIGTVTAQQAKDWGFSGVMLRGSGVCWDLRKAAPYDVHDQLDPDIPVGTRGDRYDRYCIRIEEMRQSVRIIVQCLNQMPSGMIKADDRKLCPPSRSRMKLSMESSIHHFEPYTEGFSVPAPSTYTAVEAPKGEFGVFLVSNGSNRPYRRKIRAPCFAHSQGLDSMSKHHMPADVVTIIGTQDIVSGEVDR</sequence>
<gene>
    <name type="primary">NAD7</name>
</gene>
<proteinExistence type="evidence at transcript level"/>
<reference key="1">
    <citation type="journal article" date="1995" name="Mol. Gen. Genet.">
        <title>Deletion of the last two exons of the mitochondrial nad7 gene results in lack of the NAD7 polypeptide in a Nicotiana sylvestris CMS mutant.</title>
        <authorList>
            <person name="Pla M."/>
            <person name="Mathieu C."/>
            <person name="De Paepe R."/>
            <person name="Chetrit P."/>
            <person name="Vedel F."/>
        </authorList>
    </citation>
    <scope>NUCLEOTIDE SEQUENCE [MRNA]</scope>
    <source>
        <tissue>Leaf</tissue>
    </source>
</reference>
<accession>Q36450</accession>
<keyword id="KW-0249">Electron transport</keyword>
<keyword id="KW-0496">Mitochondrion</keyword>
<keyword id="KW-0520">NAD</keyword>
<keyword id="KW-0560">Oxidoreductase</keyword>
<keyword id="KW-1185">Reference proteome</keyword>
<keyword id="KW-0679">Respiratory chain</keyword>
<keyword id="KW-1278">Translocase</keyword>
<keyword id="KW-0813">Transport</keyword>
<keyword id="KW-0830">Ubiquinone</keyword>
<comment type="function">
    <text evidence="1">Core subunit of the mitochondrial membrane respiratory chain NADH dehydrogenase (Complex I) that is believed to belong to the minimal assembly required for catalysis. Complex I functions in the transfer of electrons from NADH to the respiratory chain. The immediate electron acceptor for the enzyme is believed to be ubiquinone (By similarity). Component of the iron-sulfur (IP) fragment of the enzyme.</text>
</comment>
<comment type="catalytic activity">
    <reaction>
        <text>a ubiquinone + NADH + 5 H(+)(in) = a ubiquinol + NAD(+) + 4 H(+)(out)</text>
        <dbReference type="Rhea" id="RHEA:29091"/>
        <dbReference type="Rhea" id="RHEA-COMP:9565"/>
        <dbReference type="Rhea" id="RHEA-COMP:9566"/>
        <dbReference type="ChEBI" id="CHEBI:15378"/>
        <dbReference type="ChEBI" id="CHEBI:16389"/>
        <dbReference type="ChEBI" id="CHEBI:17976"/>
        <dbReference type="ChEBI" id="CHEBI:57540"/>
        <dbReference type="ChEBI" id="CHEBI:57945"/>
        <dbReference type="EC" id="7.1.1.2"/>
    </reaction>
</comment>
<comment type="subunit">
    <text evidence="1">Complex I is composed of about 45 different subunits. This is a component of the iron-sulfur (IP) fragment of the enzyme (By similarity).</text>
</comment>
<comment type="subcellular location">
    <subcellularLocation>
        <location>Mitochondrion</location>
    </subcellularLocation>
</comment>
<comment type="similarity">
    <text evidence="3">Belongs to the complex I 49 kDa subunit family.</text>
</comment>
<geneLocation type="mitochondrion"/>
<organism>
    <name type="scientific">Nicotiana sylvestris</name>
    <name type="common">Wood tobacco</name>
    <name type="synonym">South American tobacco</name>
    <dbReference type="NCBI Taxonomy" id="4096"/>
    <lineage>
        <taxon>Eukaryota</taxon>
        <taxon>Viridiplantae</taxon>
        <taxon>Streptophyta</taxon>
        <taxon>Embryophyta</taxon>
        <taxon>Tracheophyta</taxon>
        <taxon>Spermatophyta</taxon>
        <taxon>Magnoliopsida</taxon>
        <taxon>eudicotyledons</taxon>
        <taxon>Gunneridae</taxon>
        <taxon>Pentapetalae</taxon>
        <taxon>asterids</taxon>
        <taxon>lamiids</taxon>
        <taxon>Solanales</taxon>
        <taxon>Solanaceae</taxon>
        <taxon>Nicotianoideae</taxon>
        <taxon>Nicotianeae</taxon>
        <taxon>Nicotiana</taxon>
    </lineage>
</organism>
<name>NDUS2_NICSY</name>
<protein>
    <recommendedName>
        <fullName>NADH dehydrogenase [ubiquinone] iron-sulfur protein 2</fullName>
        <ecNumber>7.1.1.2</ecNumber>
    </recommendedName>
    <alternativeName>
        <fullName>NADH dehydrogenase subunit 7</fullName>
    </alternativeName>
</protein>
<feature type="chain" id="PRO_0000118585" description="NADH dehydrogenase [ubiquinone] iron-sulfur protein 2">
    <location>
        <begin position="1"/>
        <end position="394"/>
    </location>
</feature>
<feature type="region of interest" description="Disordered" evidence="2">
    <location>
        <begin position="1"/>
        <end position="22"/>
    </location>
</feature>
<feature type="compositionally biased region" description="Polar residues" evidence="2">
    <location>
        <begin position="1"/>
        <end position="16"/>
    </location>
</feature>